<dbReference type="EC" id="4.2.1.180" evidence="3"/>
<dbReference type="EMBL" id="AF173961">
    <property type="protein sequence ID" value="AAF89843.1"/>
    <property type="molecule type" value="Genomic_DNA"/>
</dbReference>
<dbReference type="SMR" id="Q9KJE7"/>
<dbReference type="KEGG" id="ag:AAF89843"/>
<dbReference type="BioCyc" id="MetaCyc:MONOMER-688"/>
<dbReference type="UniPathway" id="UPA00273"/>
<dbReference type="GO" id="GO:0016829">
    <property type="term" value="F:lyase activity"/>
    <property type="evidence" value="ECO:0007669"/>
    <property type="project" value="UniProtKB-KW"/>
</dbReference>
<dbReference type="GO" id="GO:0006635">
    <property type="term" value="P:fatty acid beta-oxidation"/>
    <property type="evidence" value="ECO:0007669"/>
    <property type="project" value="TreeGrafter"/>
</dbReference>
<dbReference type="GO" id="GO:0042203">
    <property type="term" value="P:toluene catabolic process"/>
    <property type="evidence" value="ECO:0007669"/>
    <property type="project" value="UniProtKB-UniPathway"/>
</dbReference>
<dbReference type="CDD" id="cd06558">
    <property type="entry name" value="crotonase-like"/>
    <property type="match status" value="1"/>
</dbReference>
<dbReference type="FunFam" id="3.90.226.10:FF:000009">
    <property type="entry name" value="Carnitinyl-CoA dehydratase"/>
    <property type="match status" value="1"/>
</dbReference>
<dbReference type="Gene3D" id="3.90.226.10">
    <property type="entry name" value="2-enoyl-CoA Hydratase, Chain A, domain 1"/>
    <property type="match status" value="1"/>
</dbReference>
<dbReference type="Gene3D" id="1.10.12.10">
    <property type="entry name" value="Lyase 2-enoyl-coa Hydratase, Chain A, domain 2"/>
    <property type="match status" value="1"/>
</dbReference>
<dbReference type="InterPro" id="IPR029045">
    <property type="entry name" value="ClpP/crotonase-like_dom_sf"/>
</dbReference>
<dbReference type="InterPro" id="IPR018376">
    <property type="entry name" value="Enoyl-CoA_hyd/isom_CS"/>
</dbReference>
<dbReference type="InterPro" id="IPR001753">
    <property type="entry name" value="Enoyl-CoA_hydra/iso"/>
</dbReference>
<dbReference type="InterPro" id="IPR014748">
    <property type="entry name" value="Enoyl-CoA_hydra_C"/>
</dbReference>
<dbReference type="PANTHER" id="PTHR11941:SF54">
    <property type="entry name" value="ENOYL-COA HYDRATASE, MITOCHONDRIAL"/>
    <property type="match status" value="1"/>
</dbReference>
<dbReference type="PANTHER" id="PTHR11941">
    <property type="entry name" value="ENOYL-COA HYDRATASE-RELATED"/>
    <property type="match status" value="1"/>
</dbReference>
<dbReference type="Pfam" id="PF00378">
    <property type="entry name" value="ECH_1"/>
    <property type="match status" value="1"/>
</dbReference>
<dbReference type="SUPFAM" id="SSF52096">
    <property type="entry name" value="ClpP/crotonase"/>
    <property type="match status" value="1"/>
</dbReference>
<dbReference type="PROSITE" id="PS00166">
    <property type="entry name" value="ENOYL_COA_HYDRATASE"/>
    <property type="match status" value="1"/>
</dbReference>
<gene>
    <name evidence="4" type="primary">bbsH</name>
</gene>
<organism>
    <name type="scientific">Thauera aromatica</name>
    <dbReference type="NCBI Taxonomy" id="59405"/>
    <lineage>
        <taxon>Bacteria</taxon>
        <taxon>Pseudomonadati</taxon>
        <taxon>Pseudomonadota</taxon>
        <taxon>Betaproteobacteria</taxon>
        <taxon>Rhodocyclales</taxon>
        <taxon>Zoogloeaceae</taxon>
        <taxon>Thauera</taxon>
    </lineage>
</organism>
<feature type="initiator methionine" description="Removed" evidence="2">
    <location>
        <position position="1"/>
    </location>
</feature>
<feature type="chain" id="PRO_0000457321" description="(E)-benzylidenesuccinyl-CoA hydratase">
    <location>
        <begin position="2"/>
        <end position="256"/>
    </location>
</feature>
<feature type="active site" description="Nucleophile" evidence="1">
    <location>
        <position position="110"/>
    </location>
</feature>
<feature type="active site" description="Proton acceptor" evidence="1">
    <location>
        <position position="130"/>
    </location>
</feature>
<protein>
    <recommendedName>
        <fullName evidence="5">(E)-benzylidenesuccinyl-CoA hydratase</fullName>
        <ecNumber evidence="3">4.2.1.180</ecNumber>
    </recommendedName>
</protein>
<accession>Q9KJE7</accession>
<sequence>MPVTLEVSNHVAYVTLNRPEAMNSLDPESTADLTEIWARVRTDPDIRVAVLTGAGEKSFCTGTDMKKSPPPTECMAATYLRDGQPILPHMKMWKPIIAAINGYAVGGGLEIALACDLRIASTNAKFGLTEVKVASLAGLNGTQALPRAIPQAVAMKMLLTGEMISAEEALRYGLVSDVVEPSALADLARSYAEKIASAAPLSVQATKQAAVLGKDMPLEHGILYSHLLWGVLRDTEDRKEGFKAFGERRAPAFRGA</sequence>
<proteinExistence type="evidence at protein level"/>
<keyword id="KW-0903">Direct protein sequencing</keyword>
<keyword id="KW-0456">Lyase</keyword>
<name>BBSH_THAAR</name>
<comment type="function">
    <text evidence="3">Involved in an anaerobic toluene degradation pathway (PubMed:34601806). Catalyzes the hydration of (E)-2-benzylidenesuccinyl-CoA to the corresponding alcohol intermediate, 2-(alpha-hydroxybenzyl)succinyl-CoA (PubMed:34601806). Also accepts the N-acetylcysteamine (NAC) thioester of (E)-benzylidenesuccinate (PubMed:34601806).</text>
</comment>
<comment type="catalytic activity">
    <reaction evidence="3">
        <text>(2S)-[(R)-hydroxy(phenyl)methyl]succinyl-CoA = (E)-2-benzylidenesuccinyl-CoA + H2O</text>
        <dbReference type="Rhea" id="RHEA:70227"/>
        <dbReference type="ChEBI" id="CHEBI:15377"/>
        <dbReference type="ChEBI" id="CHEBI:58519"/>
        <dbReference type="ChEBI" id="CHEBI:189059"/>
        <dbReference type="EC" id="4.2.1.180"/>
    </reaction>
    <physiologicalReaction direction="right-to-left" evidence="3">
        <dbReference type="Rhea" id="RHEA:70229"/>
    </physiologicalReaction>
</comment>
<comment type="biophysicochemical properties">
    <kinetics>
        <Vmax evidence="3">31.5 umol/min/mg enzyme with (E)-2-benzylidenesuccinyl-CoA as substrate</Vmax>
        <Vmax evidence="3">31.0 umol/min/mg enzyme with (E)-2-benzylidenesuccinyl-NAC as substrate</Vmax>
    </kinetics>
    <phDependence>
        <text evidence="3">Optimum pH is 6.2.</text>
    </phDependence>
</comment>
<comment type="pathway">
    <text evidence="3 7">Xenobiotic degradation; toluene degradation.</text>
</comment>
<comment type="subunit">
    <text evidence="3">Homotrimer.</text>
</comment>
<comment type="induction">
    <text evidence="2">Induced by toluene.</text>
</comment>
<comment type="similarity">
    <text evidence="6">Belongs to the enoyl-CoA hydratase/isomerase family.</text>
</comment>
<reference key="1">
    <citation type="journal article" date="2000" name="J. Bacteriol.">
        <title>Anaerobic toluene catabolism of Thauera aromatica: the bbs operon codes for enzymes of beta-oxidation of the intermediate benzylsuccinate.</title>
        <authorList>
            <person name="Leuthner B."/>
            <person name="Heider J."/>
        </authorList>
    </citation>
    <scope>NUCLEOTIDE SEQUENCE [GENOMIC DNA]</scope>
    <scope>PROTEIN SEQUENCE OF 2-9</scope>
    <scope>PATHWAY</scope>
    <scope>INDUCTION</scope>
    <source>
        <strain>DSM 6984 / CIP 107765 / K172</strain>
    </source>
</reference>
<reference key="2">
    <citation type="journal article" date="2022" name="FEBS J.">
        <title>Inactive pseudoenzyme subunits in heterotetrameric BbsCD, a novel short-chain alcohol dehydrogenase involved in anaerobic toluene degradation.</title>
        <authorList>
            <person name="von Horsten S."/>
            <person name="Lippert M.L."/>
            <person name="Geisselbrecht Y."/>
            <person name="Schuehle K."/>
            <person name="Schall I."/>
            <person name="Essen L.O."/>
            <person name="Heider J."/>
        </authorList>
    </citation>
    <scope>FUNCTION</scope>
    <scope>CATALYTIC ACTIVITY</scope>
    <scope>BIOPHYSICOCHEMICAL PROPERTIES</scope>
    <scope>PATHWAY</scope>
    <scope>SUBUNIT</scope>
</reference>
<evidence type="ECO:0000250" key="1">
    <source>
        <dbReference type="UniProtKB" id="Q5LLW6"/>
    </source>
</evidence>
<evidence type="ECO:0000269" key="2">
    <source>
    </source>
</evidence>
<evidence type="ECO:0000269" key="3">
    <source>
    </source>
</evidence>
<evidence type="ECO:0000303" key="4">
    <source>
    </source>
</evidence>
<evidence type="ECO:0000303" key="5">
    <source>
    </source>
</evidence>
<evidence type="ECO:0000305" key="6"/>
<evidence type="ECO:0000305" key="7">
    <source>
    </source>
</evidence>